<sequence>MHLQLNLCAILLSVLNGIQGAPKSINSKSCAISFPENVTAKKEPVYLKPSNDGSLSTPLQPSGPFVSLKIGESLAIFCPGDGKDVETITCNTNFDLASYSCNKSTSTDTIETEEVCGGSGKVYKVGFPLPSGNFHSIYQTCFDKKNLTPLYSIHILNGQAVGYHLKHTRGSFRTNGIYGKVNIDKLYKTQIEKFNKLFGPKQTFFRRPLNFLSRGHLSPEVDFTFRREQHATEMYINTAPQYQSINQGNWLRVENHVRDLAKVLQKDITVVTGILGILRLKSKKIEKEIYLGDDVIAVPAMFWKAVFDPQKQEAIVFVSSNNPHVKTFNPNCKDVCAQAGFGNDNLEYFSNYSIGLTICCKLEEFVKRNKIILPKEVNNKNYTKKLLKFPKTRNKEGDKKVVRKRAKGA</sequence>
<name>NUC_LUTLO</name>
<feature type="signal peptide" evidence="1">
    <location>
        <begin position="1"/>
        <end position="20"/>
    </location>
</feature>
<feature type="chain" id="PRO_5004263467" description="Salivary endonuclease" evidence="1">
    <location>
        <begin position="21"/>
        <end position="409"/>
    </location>
</feature>
<feature type="active site" description="Proton acceptor" evidence="2">
    <location>
        <position position="216"/>
    </location>
</feature>
<feature type="binding site" evidence="3">
    <location>
        <position position="246"/>
    </location>
    <ligand>
        <name>Mg(2+)</name>
        <dbReference type="ChEBI" id="CHEBI:18420"/>
        <note>catalytic</note>
    </ligand>
</feature>
<feature type="glycosylation site" description="N-linked (GlcNAc...) asparagine" evidence="4">
    <location>
        <position position="37"/>
    </location>
</feature>
<feature type="glycosylation site" description="N-linked (GlcNAc...) asparagine" evidence="4">
    <location>
        <position position="102"/>
    </location>
</feature>
<feature type="glycosylation site" description="N-linked (GlcNAc...) asparagine" evidence="4">
    <location>
        <position position="351"/>
    </location>
</feature>
<feature type="glycosylation site" description="N-linked (GlcNAc...) asparagine" evidence="4">
    <location>
        <position position="381"/>
    </location>
</feature>
<feature type="mutagenesis site" description="Abolishes an ability to disrupt neutrophil extracellular traps. Reduces parasite virulence in a murine cutaneous leishmaniasis model." evidence="6">
    <original>RGH</original>
    <variation>AAA</variation>
    <location>
        <begin position="214"/>
        <end position="216"/>
    </location>
</feature>
<evidence type="ECO:0000255" key="1"/>
<evidence type="ECO:0000255" key="2">
    <source>
        <dbReference type="PIRSR" id="PIRSR640255-1"/>
    </source>
</evidence>
<evidence type="ECO:0000255" key="3">
    <source>
        <dbReference type="PIRSR" id="PIRSR640255-2"/>
    </source>
</evidence>
<evidence type="ECO:0000255" key="4">
    <source>
        <dbReference type="PROSITE-ProRule" id="PRU00498"/>
    </source>
</evidence>
<evidence type="ECO:0000269" key="5">
    <source>
    </source>
</evidence>
<evidence type="ECO:0000269" key="6">
    <source>
    </source>
</evidence>
<evidence type="ECO:0000269" key="7">
    <source>
    </source>
</evidence>
<evidence type="ECO:0000303" key="8">
    <source>
    </source>
</evidence>
<evidence type="ECO:0000303" key="9">
    <source>
    </source>
</evidence>
<evidence type="ECO:0000305" key="10"/>
<evidence type="ECO:0000312" key="11">
    <source>
        <dbReference type="EMBL" id="AAS16916.1"/>
    </source>
</evidence>
<accession>Q5WPS9</accession>
<protein>
    <recommendedName>
        <fullName evidence="10">Salivary endonuclease</fullName>
        <ecNumber evidence="6">3.1.-.-</ecNumber>
    </recommendedName>
    <alternativeName>
        <fullName evidence="9">Lundep</fullName>
    </alternativeName>
</protein>
<dbReference type="EC" id="3.1.-.-" evidence="6"/>
<dbReference type="EMBL" id="AY455916">
    <property type="protein sequence ID" value="AAS16916.1"/>
    <property type="molecule type" value="mRNA"/>
</dbReference>
<dbReference type="SMR" id="Q5WPS9"/>
<dbReference type="VEuPathDB" id="VectorBase:LLOJ005361"/>
<dbReference type="VEuPathDB" id="VectorBase:LLONM1_009868"/>
<dbReference type="Proteomes" id="UP000092461">
    <property type="component" value="Unplaced"/>
</dbReference>
<dbReference type="GO" id="GO:0005576">
    <property type="term" value="C:extracellular region"/>
    <property type="evidence" value="ECO:0007669"/>
    <property type="project" value="UniProtKB-SubCell"/>
</dbReference>
<dbReference type="GO" id="GO:0005743">
    <property type="term" value="C:mitochondrial inner membrane"/>
    <property type="evidence" value="ECO:0007669"/>
    <property type="project" value="TreeGrafter"/>
</dbReference>
<dbReference type="GO" id="GO:0005634">
    <property type="term" value="C:nucleus"/>
    <property type="evidence" value="ECO:0007669"/>
    <property type="project" value="TreeGrafter"/>
</dbReference>
<dbReference type="GO" id="GO:0046872">
    <property type="term" value="F:metal ion binding"/>
    <property type="evidence" value="ECO:0007669"/>
    <property type="project" value="UniProtKB-KW"/>
</dbReference>
<dbReference type="GO" id="GO:0003676">
    <property type="term" value="F:nucleic acid binding"/>
    <property type="evidence" value="ECO:0007669"/>
    <property type="project" value="InterPro"/>
</dbReference>
<dbReference type="GO" id="GO:0004521">
    <property type="term" value="F:RNA endonuclease activity"/>
    <property type="evidence" value="ECO:0007669"/>
    <property type="project" value="TreeGrafter"/>
</dbReference>
<dbReference type="GO" id="GO:0000014">
    <property type="term" value="F:single-stranded DNA endodeoxyribonuclease activity"/>
    <property type="evidence" value="ECO:0007669"/>
    <property type="project" value="TreeGrafter"/>
</dbReference>
<dbReference type="GO" id="GO:0090729">
    <property type="term" value="F:toxin activity"/>
    <property type="evidence" value="ECO:0007669"/>
    <property type="project" value="UniProtKB-KW"/>
</dbReference>
<dbReference type="GO" id="GO:0006309">
    <property type="term" value="P:apoptotic DNA fragmentation"/>
    <property type="evidence" value="ECO:0007669"/>
    <property type="project" value="TreeGrafter"/>
</dbReference>
<dbReference type="Gene3D" id="3.40.570.10">
    <property type="entry name" value="Extracellular Endonuclease, subunit A"/>
    <property type="match status" value="1"/>
</dbReference>
<dbReference type="InterPro" id="IPR044929">
    <property type="entry name" value="DNA/RNA_non-sp_Endonuclease_sf"/>
</dbReference>
<dbReference type="InterPro" id="IPR001604">
    <property type="entry name" value="Endo_G_ENPP1-like_dom"/>
</dbReference>
<dbReference type="InterPro" id="IPR020821">
    <property type="entry name" value="ENPP1-3/EXOG-like_nuc-like"/>
</dbReference>
<dbReference type="InterPro" id="IPR044925">
    <property type="entry name" value="His-Me_finger_sf"/>
</dbReference>
<dbReference type="InterPro" id="IPR040255">
    <property type="entry name" value="Non-specific_endonuclease"/>
</dbReference>
<dbReference type="PANTHER" id="PTHR13966">
    <property type="entry name" value="ENDONUCLEASE RELATED"/>
    <property type="match status" value="1"/>
</dbReference>
<dbReference type="PANTHER" id="PTHR13966:SF17">
    <property type="entry name" value="ENDONUCLEASE-RELATED"/>
    <property type="match status" value="1"/>
</dbReference>
<dbReference type="Pfam" id="PF01223">
    <property type="entry name" value="Endonuclease_NS"/>
    <property type="match status" value="1"/>
</dbReference>
<dbReference type="SMART" id="SM00892">
    <property type="entry name" value="Endonuclease_NS"/>
    <property type="match status" value="1"/>
</dbReference>
<dbReference type="SMART" id="SM00477">
    <property type="entry name" value="NUC"/>
    <property type="match status" value="1"/>
</dbReference>
<dbReference type="SUPFAM" id="SSF54060">
    <property type="entry name" value="His-Me finger endonucleases"/>
    <property type="match status" value="1"/>
</dbReference>
<comment type="function">
    <text evidence="6 7">Hydrolyzes single-stranded and double-stranded DNA with little sequence specificity (PubMed:24516388). Inhibits contact pathway of blood coagulation in the host by preventing activation of coagulation factor XII (F12) triggered by soluble DNA (PubMed:24516388). Modestly up-regulates expression of CSF2, CXCL1 and CXCL8 in cultured human dermal microvascular endothelial cells (PubMed:29723281). At higher doses promotes host neutrophil recruitment at the injection site in mouse model (PubMed:29723281).</text>
</comment>
<comment type="function">
    <text evidence="6">(Microbial infection) Increases Leishmania major survival in the host by disrupting parasite-induced neutrophil extracellular traps (PubMed:24516388). Exacerbates L.major parasite infectivity and increases cutaneous lesions in mouse model (PubMed:24516388).</text>
</comment>
<comment type="cofactor">
    <cofactor evidence="6">
        <name>Mg(2+)</name>
        <dbReference type="ChEBI" id="CHEBI:18420"/>
    </cofactor>
</comment>
<comment type="biophysicochemical properties">
    <phDependence>
        <text evidence="6">Optimum pH is 5.0-8.0.</text>
    </phDependence>
</comment>
<comment type="subcellular location">
    <subcellularLocation>
        <location evidence="10">Secreted</location>
    </subcellularLocation>
</comment>
<comment type="tissue specificity">
    <text evidence="5">Salivary gland.</text>
</comment>
<comment type="miscellaneous">
    <text evidence="6 7">Passive immunization of mice with antibodies against the protein reduces feeding success of sand flies when fed on immunized mice (PubMed:24516388). Enhances dermonecrotic lesions caused by venom serine protease from Crotalus oreganus helleri (hemorrhagic factor) (PubMed:29723281). Immunization against the protein protects mice against L.major infection; protective immunity is abrogated in B-cell-deficient mice indicating that antibodies against the proteins play a significant role for disease protection (PubMed:29723281).</text>
</comment>
<comment type="similarity">
    <text evidence="10">Belongs to the DNA/RNA non-specific endonuclease family.</text>
</comment>
<reference evidence="11" key="1">
    <citation type="journal article" date="2004" name="J. Exp. Biol.">
        <title>Identification of the most abundant secreted proteins from the salivary glands of the sand fly Lutzomyia longipalpis, vector of Leishmania chagasi.</title>
        <authorList>
            <person name="Valenzuela J.G."/>
            <person name="Garfield M."/>
            <person name="Rowton E.D."/>
            <person name="Pham V.M."/>
        </authorList>
    </citation>
    <scope>NUCLEOTIDE SEQUENCE [LARGE SCALE MRNA]</scope>
    <scope>TISSUE SPECIFICITY</scope>
    <source>
        <tissue evidence="8">Salivary gland</tissue>
    </source>
</reference>
<reference evidence="10" key="2">
    <citation type="journal article" date="2014" name="PLoS Pathog.">
        <title>Lundep, a sand fly salivary endonuclease increases Leishmania parasite survival in neutrophils and inhibits XIIa contact activation in human plasma.</title>
        <authorList>
            <person name="Chagas A.C."/>
            <person name="Oliveira F."/>
            <person name="Debrabant A."/>
            <person name="Valenzuela J.G."/>
            <person name="Ribeiro J.M."/>
            <person name="Calvo E."/>
        </authorList>
    </citation>
    <scope>FUNCTION</scope>
    <scope>FUNCTION (MICROBIAL INFECTION)</scope>
    <scope>CATALYTIC ACTIVITY</scope>
    <scope>COFACTOR</scope>
    <scope>BIOPHYSICOCHEMICAL PROPERTIES</scope>
    <scope>MUTAGENESIS OF 214-ARG--HIS-216</scope>
</reference>
<reference key="3">
    <citation type="journal article" date="2018" name="PLoS Pathog.">
        <title>Immunity to LuloHya and Lundep, the salivary spreading factors from Lutzomyia longipalpis, protects against Leishmania major infection.</title>
        <authorList>
            <person name="Martin-Martin I."/>
            <person name="Chagas A.C."/>
            <person name="Guimaraes-Costa A.B."/>
            <person name="Amo L."/>
            <person name="Oliveira F."/>
            <person name="Moore I.N."/>
            <person name="DeSouza-Vieira T.S."/>
            <person name="Sanchez E.E."/>
            <person name="Suntravat M."/>
            <person name="Valenzuela J.G."/>
            <person name="Ribeiro J.M.C."/>
            <person name="Calvo E."/>
        </authorList>
    </citation>
    <scope>FUNCTION</scope>
</reference>
<proteinExistence type="evidence at protein level"/>
<organism evidence="11">
    <name type="scientific">Lutzomyia longipalpis</name>
    <name type="common">Sand fly</name>
    <dbReference type="NCBI Taxonomy" id="7200"/>
    <lineage>
        <taxon>Eukaryota</taxon>
        <taxon>Metazoa</taxon>
        <taxon>Ecdysozoa</taxon>
        <taxon>Arthropoda</taxon>
        <taxon>Hexapoda</taxon>
        <taxon>Insecta</taxon>
        <taxon>Pterygota</taxon>
        <taxon>Neoptera</taxon>
        <taxon>Endopterygota</taxon>
        <taxon>Diptera</taxon>
        <taxon>Nematocera</taxon>
        <taxon>Psychodoidea</taxon>
        <taxon>Psychodidae</taxon>
        <taxon>Lutzomyia</taxon>
        <taxon>Lutzomyia</taxon>
    </lineage>
</organism>
<keyword id="KW-1203">Blood coagulation cascade inhibiting toxin</keyword>
<keyword id="KW-0255">Endonuclease</keyword>
<keyword id="KW-0325">Glycoprotein</keyword>
<keyword id="KW-1199">Hemostasis impairing toxin</keyword>
<keyword id="KW-0378">Hydrolase</keyword>
<keyword id="KW-0479">Metal-binding</keyword>
<keyword id="KW-0540">Nuclease</keyword>
<keyword id="KW-0964">Secreted</keyword>
<keyword id="KW-0732">Signal</keyword>
<keyword id="KW-0800">Toxin</keyword>